<feature type="chain" id="PRO_0000201834" description="Ureidoacrylate amidohydrolase RutB">
    <location>
        <begin position="1"/>
        <end position="230"/>
    </location>
</feature>
<feature type="active site" description="Proton acceptor" evidence="1">
    <location>
        <position position="24"/>
    </location>
</feature>
<feature type="active site" evidence="1">
    <location>
        <position position="133"/>
    </location>
</feature>
<feature type="active site" description="Nucleophile" evidence="1">
    <location>
        <position position="166"/>
    </location>
</feature>
<gene>
    <name evidence="1" type="primary">rutB</name>
    <name type="ordered locus">Z1510</name>
    <name type="ordered locus">ECs1257</name>
</gene>
<sequence>MTTLTARPEAITFDPQQSALIVVDMQNAYATPGGYLDLAGFDVSTTRPVIANIQTAVTAARAAGMLIIWFQNGWDEQYVEAGGPGSPNFHKSNALKTMRKQPQLQGKLLAKGSWDYQLVDELVPQPGDIVLPKPRYSGFFNTPLDSILRSRGIRHLVFTSIATNVCVESTLRDGFFLEYFGVVLEDATHQAGPEFVQKAALFNIETFFGWVSDVETFCDALSPTSFARIA</sequence>
<evidence type="ECO:0000255" key="1">
    <source>
        <dbReference type="HAMAP-Rule" id="MF_00830"/>
    </source>
</evidence>
<evidence type="ECO:0000305" key="2"/>
<keyword id="KW-0378">Hydrolase</keyword>
<keyword id="KW-1185">Reference proteome</keyword>
<accession>Q8XAU3</accession>
<reference key="1">
    <citation type="journal article" date="2001" name="Nature">
        <title>Genome sequence of enterohaemorrhagic Escherichia coli O157:H7.</title>
        <authorList>
            <person name="Perna N.T."/>
            <person name="Plunkett G. III"/>
            <person name="Burland V."/>
            <person name="Mau B."/>
            <person name="Glasner J.D."/>
            <person name="Rose D.J."/>
            <person name="Mayhew G.F."/>
            <person name="Evans P.S."/>
            <person name="Gregor J."/>
            <person name="Kirkpatrick H.A."/>
            <person name="Posfai G."/>
            <person name="Hackett J."/>
            <person name="Klink S."/>
            <person name="Boutin A."/>
            <person name="Shao Y."/>
            <person name="Miller L."/>
            <person name="Grotbeck E.J."/>
            <person name="Davis N.W."/>
            <person name="Lim A."/>
            <person name="Dimalanta E.T."/>
            <person name="Potamousis K."/>
            <person name="Apodaca J."/>
            <person name="Anantharaman T.S."/>
            <person name="Lin J."/>
            <person name="Yen G."/>
            <person name="Schwartz D.C."/>
            <person name="Welch R.A."/>
            <person name="Blattner F.R."/>
        </authorList>
    </citation>
    <scope>NUCLEOTIDE SEQUENCE [LARGE SCALE GENOMIC DNA]</scope>
    <source>
        <strain>O157:H7 / EDL933 / ATCC 700927 / EHEC</strain>
    </source>
</reference>
<reference key="2">
    <citation type="journal article" date="2001" name="DNA Res.">
        <title>Complete genome sequence of enterohemorrhagic Escherichia coli O157:H7 and genomic comparison with a laboratory strain K-12.</title>
        <authorList>
            <person name="Hayashi T."/>
            <person name="Makino K."/>
            <person name="Ohnishi M."/>
            <person name="Kurokawa K."/>
            <person name="Ishii K."/>
            <person name="Yokoyama K."/>
            <person name="Han C.-G."/>
            <person name="Ohtsubo E."/>
            <person name="Nakayama K."/>
            <person name="Murata T."/>
            <person name="Tanaka M."/>
            <person name="Tobe T."/>
            <person name="Iida T."/>
            <person name="Takami H."/>
            <person name="Honda T."/>
            <person name="Sasakawa C."/>
            <person name="Ogasawara N."/>
            <person name="Yasunaga T."/>
            <person name="Kuhara S."/>
            <person name="Shiba T."/>
            <person name="Hattori M."/>
            <person name="Shinagawa H."/>
        </authorList>
    </citation>
    <scope>NUCLEOTIDE SEQUENCE [LARGE SCALE GENOMIC DNA]</scope>
    <source>
        <strain>O157:H7 / Sakai / RIMD 0509952 / EHEC</strain>
    </source>
</reference>
<name>RUTB_ECO57</name>
<organism>
    <name type="scientific">Escherichia coli O157:H7</name>
    <dbReference type="NCBI Taxonomy" id="83334"/>
    <lineage>
        <taxon>Bacteria</taxon>
        <taxon>Pseudomonadati</taxon>
        <taxon>Pseudomonadota</taxon>
        <taxon>Gammaproteobacteria</taxon>
        <taxon>Enterobacterales</taxon>
        <taxon>Enterobacteriaceae</taxon>
        <taxon>Escherichia</taxon>
    </lineage>
</organism>
<protein>
    <recommendedName>
        <fullName evidence="1">Ureidoacrylate amidohydrolase RutB</fullName>
        <ecNumber evidence="1">3.5.1.110</ecNumber>
    </recommendedName>
</protein>
<dbReference type="EC" id="3.5.1.110" evidence="1"/>
<dbReference type="EMBL" id="AE005174">
    <property type="protein sequence ID" value="AAG55627.1"/>
    <property type="status" value="ALT_INIT"/>
    <property type="molecule type" value="Genomic_DNA"/>
</dbReference>
<dbReference type="EMBL" id="BA000007">
    <property type="protein sequence ID" value="BAB34680.1"/>
    <property type="status" value="ALT_INIT"/>
    <property type="molecule type" value="Genomic_DNA"/>
</dbReference>
<dbReference type="PIR" id="A90786">
    <property type="entry name" value="A90786"/>
</dbReference>
<dbReference type="PIR" id="G85645">
    <property type="entry name" value="G85645"/>
</dbReference>
<dbReference type="RefSeq" id="NP_309284.3">
    <property type="nucleotide sequence ID" value="NC_002695.1"/>
</dbReference>
<dbReference type="RefSeq" id="WP_001303888.1">
    <property type="nucleotide sequence ID" value="NZ_VOAI01000026.1"/>
</dbReference>
<dbReference type="SMR" id="Q8XAU3"/>
<dbReference type="STRING" id="155864.Z1510"/>
<dbReference type="GeneID" id="912521"/>
<dbReference type="KEGG" id="ece:Z1510"/>
<dbReference type="KEGG" id="ecs:ECs_1257"/>
<dbReference type="PATRIC" id="fig|386585.9.peg.1360"/>
<dbReference type="eggNOG" id="COG1335">
    <property type="taxonomic scope" value="Bacteria"/>
</dbReference>
<dbReference type="HOGENOM" id="CLU_068979_8_0_6"/>
<dbReference type="OMA" id="WHKSNAL"/>
<dbReference type="Proteomes" id="UP000000558">
    <property type="component" value="Chromosome"/>
</dbReference>
<dbReference type="Proteomes" id="UP000002519">
    <property type="component" value="Chromosome"/>
</dbReference>
<dbReference type="GO" id="GO:0016811">
    <property type="term" value="F:hydrolase activity, acting on carbon-nitrogen (but not peptide) bonds, in linear amides"/>
    <property type="evidence" value="ECO:0007669"/>
    <property type="project" value="UniProtKB-UniRule"/>
</dbReference>
<dbReference type="GO" id="GO:0019740">
    <property type="term" value="P:nitrogen utilization"/>
    <property type="evidence" value="ECO:0007669"/>
    <property type="project" value="UniProtKB-UniRule"/>
</dbReference>
<dbReference type="GO" id="GO:0006212">
    <property type="term" value="P:uracil catabolic process"/>
    <property type="evidence" value="ECO:0007669"/>
    <property type="project" value="UniProtKB-UniRule"/>
</dbReference>
<dbReference type="CDD" id="cd00431">
    <property type="entry name" value="cysteine_hydrolases"/>
    <property type="match status" value="1"/>
</dbReference>
<dbReference type="FunFam" id="3.40.50.850:FF:000004">
    <property type="entry name" value="Peroxyureidoacrylate/ureidoacrylate amidohydrolase RutB"/>
    <property type="match status" value="1"/>
</dbReference>
<dbReference type="Gene3D" id="3.40.50.850">
    <property type="entry name" value="Isochorismatase-like"/>
    <property type="match status" value="1"/>
</dbReference>
<dbReference type="HAMAP" id="MF_00830">
    <property type="entry name" value="RutB"/>
    <property type="match status" value="1"/>
</dbReference>
<dbReference type="InterPro" id="IPR000868">
    <property type="entry name" value="Isochorismatase-like_dom"/>
</dbReference>
<dbReference type="InterPro" id="IPR050272">
    <property type="entry name" value="Isochorismatase-like_hydrls"/>
</dbReference>
<dbReference type="InterPro" id="IPR036380">
    <property type="entry name" value="Isochorismatase-like_sf"/>
</dbReference>
<dbReference type="InterPro" id="IPR019916">
    <property type="entry name" value="RutB"/>
</dbReference>
<dbReference type="NCBIfam" id="TIGR03614">
    <property type="entry name" value="RutB"/>
    <property type="match status" value="1"/>
</dbReference>
<dbReference type="PANTHER" id="PTHR43540:SF6">
    <property type="entry name" value="ISOCHORISMATASE-LIKE DOMAIN-CONTAINING PROTEIN"/>
    <property type="match status" value="1"/>
</dbReference>
<dbReference type="PANTHER" id="PTHR43540">
    <property type="entry name" value="PEROXYUREIDOACRYLATE/UREIDOACRYLATE AMIDOHYDROLASE-RELATED"/>
    <property type="match status" value="1"/>
</dbReference>
<dbReference type="Pfam" id="PF00857">
    <property type="entry name" value="Isochorismatase"/>
    <property type="match status" value="1"/>
</dbReference>
<dbReference type="SUPFAM" id="SSF52499">
    <property type="entry name" value="Isochorismatase-like hydrolases"/>
    <property type="match status" value="1"/>
</dbReference>
<proteinExistence type="inferred from homology"/>
<comment type="function">
    <text evidence="1">Hydrolyzes ureidoacrylate to form aminoacrylate and carbamate. The carbamate hydrolyzes spontaneously, thereby releasing one of the nitrogen atoms of the pyrimidine ring as ammonia and one of its carbon atoms as CO2.</text>
</comment>
<comment type="catalytic activity">
    <reaction evidence="1">
        <text>(Z)-3-ureidoacrylate + H2O + H(+) = (Z)-3-aminoacrylate + NH4(+) + CO2</text>
        <dbReference type="Rhea" id="RHEA:42624"/>
        <dbReference type="ChEBI" id="CHEBI:15377"/>
        <dbReference type="ChEBI" id="CHEBI:15378"/>
        <dbReference type="ChEBI" id="CHEBI:16526"/>
        <dbReference type="ChEBI" id="CHEBI:28938"/>
        <dbReference type="ChEBI" id="CHEBI:59891"/>
        <dbReference type="ChEBI" id="CHEBI:59894"/>
        <dbReference type="EC" id="3.5.1.110"/>
    </reaction>
</comment>
<comment type="catalytic activity">
    <reaction evidence="1">
        <text>(Z)-3-ureidoacrylate + H2O = (Z)-3-aminoacrylate + carbamate + H(+)</text>
        <dbReference type="Rhea" id="RHEA:31603"/>
        <dbReference type="ChEBI" id="CHEBI:13941"/>
        <dbReference type="ChEBI" id="CHEBI:15377"/>
        <dbReference type="ChEBI" id="CHEBI:15378"/>
        <dbReference type="ChEBI" id="CHEBI:59891"/>
        <dbReference type="ChEBI" id="CHEBI:59894"/>
    </reaction>
</comment>
<comment type="catalytic activity">
    <reaction evidence="1">
        <text>(Z)-2-methylureidoacrylate + H2O + H(+) = (Z)-2-methylaminoacrylate + NH4(+) + CO2</text>
        <dbReference type="Rhea" id="RHEA:42620"/>
        <dbReference type="ChEBI" id="CHEBI:15377"/>
        <dbReference type="ChEBI" id="CHEBI:15378"/>
        <dbReference type="ChEBI" id="CHEBI:16526"/>
        <dbReference type="ChEBI" id="CHEBI:28938"/>
        <dbReference type="ChEBI" id="CHEBI:143783"/>
        <dbReference type="ChEBI" id="CHEBI:145735"/>
        <dbReference type="EC" id="3.5.1.110"/>
    </reaction>
</comment>
<comment type="induction">
    <text evidence="1">Up-regulated by the nitrogen regulatory protein C (NtrC also called GlnG) and repressed by RutR.</text>
</comment>
<comment type="similarity">
    <text evidence="1">Belongs to the isochorismatase family. RutB subfamily.</text>
</comment>
<comment type="sequence caution" evidence="2">
    <conflict type="erroneous initiation">
        <sequence resource="EMBL-CDS" id="AAG55627"/>
    </conflict>
    <text>Extended N-terminus.</text>
</comment>
<comment type="sequence caution" evidence="2">
    <conflict type="erroneous initiation">
        <sequence resource="EMBL-CDS" id="BAB34680"/>
    </conflict>
    <text>Extended N-terminus.</text>
</comment>